<feature type="chain" id="PRO_1000093257" description="Protein-L-isoaspartate O-methyltransferase">
    <location>
        <begin position="1"/>
        <end position="209"/>
    </location>
</feature>
<feature type="active site" evidence="1">
    <location>
        <position position="59"/>
    </location>
</feature>
<name>PIMT_HELPG</name>
<protein>
    <recommendedName>
        <fullName evidence="1">Protein-L-isoaspartate O-methyltransferase</fullName>
        <ecNumber evidence="1">2.1.1.77</ecNumber>
    </recommendedName>
    <alternativeName>
        <fullName evidence="1">L-isoaspartyl protein carboxyl methyltransferase</fullName>
    </alternativeName>
    <alternativeName>
        <fullName evidence="1">Protein L-isoaspartyl methyltransferase</fullName>
    </alternativeName>
    <alternativeName>
        <fullName evidence="1">Protein-beta-aspartate methyltransferase</fullName>
        <shortName evidence="1">PIMT</shortName>
    </alternativeName>
</protein>
<sequence length="209" mass="23900">MNSIKNHLMCEEIHKRFHLHPKVRKAMESIEREVFVPAPFKHFAYTLNALSMQAQQYISSPLTVAKMTQYLEIDHVDSVLEIGCGSGYQAAVLSQIFRRVFSVERIESLYLEARLRLKNLGLDNVHVKFADGNKGWEQYAPYDRILFSACAKNIPQALIDQLEEGGILVAPIQENNEQVIKRFVKQNNALRVQKVLEKCSFVPVIDGVQ</sequence>
<keyword id="KW-0963">Cytoplasm</keyword>
<keyword id="KW-0489">Methyltransferase</keyword>
<keyword id="KW-1185">Reference proteome</keyword>
<keyword id="KW-0949">S-adenosyl-L-methionine</keyword>
<keyword id="KW-0808">Transferase</keyword>
<evidence type="ECO:0000255" key="1">
    <source>
        <dbReference type="HAMAP-Rule" id="MF_00090"/>
    </source>
</evidence>
<dbReference type="EC" id="2.1.1.77" evidence="1"/>
<dbReference type="EMBL" id="CP001173">
    <property type="protein sequence ID" value="ACI27786.1"/>
    <property type="molecule type" value="Genomic_DNA"/>
</dbReference>
<dbReference type="RefSeq" id="WP_001084525.1">
    <property type="nucleotide sequence ID" value="NC_011333.1"/>
</dbReference>
<dbReference type="SMR" id="B5Z887"/>
<dbReference type="KEGG" id="hpg:HPG27_1033"/>
<dbReference type="HOGENOM" id="CLU_055432_2_0_7"/>
<dbReference type="Proteomes" id="UP000001735">
    <property type="component" value="Chromosome"/>
</dbReference>
<dbReference type="GO" id="GO:0005737">
    <property type="term" value="C:cytoplasm"/>
    <property type="evidence" value="ECO:0007669"/>
    <property type="project" value="UniProtKB-SubCell"/>
</dbReference>
<dbReference type="GO" id="GO:0004719">
    <property type="term" value="F:protein-L-isoaspartate (D-aspartate) O-methyltransferase activity"/>
    <property type="evidence" value="ECO:0007669"/>
    <property type="project" value="UniProtKB-UniRule"/>
</dbReference>
<dbReference type="GO" id="GO:0032259">
    <property type="term" value="P:methylation"/>
    <property type="evidence" value="ECO:0007669"/>
    <property type="project" value="UniProtKB-KW"/>
</dbReference>
<dbReference type="GO" id="GO:0036211">
    <property type="term" value="P:protein modification process"/>
    <property type="evidence" value="ECO:0007669"/>
    <property type="project" value="UniProtKB-UniRule"/>
</dbReference>
<dbReference type="GO" id="GO:0030091">
    <property type="term" value="P:protein repair"/>
    <property type="evidence" value="ECO:0007669"/>
    <property type="project" value="UniProtKB-UniRule"/>
</dbReference>
<dbReference type="CDD" id="cd02440">
    <property type="entry name" value="AdoMet_MTases"/>
    <property type="match status" value="1"/>
</dbReference>
<dbReference type="FunFam" id="3.40.50.150:FF:000010">
    <property type="entry name" value="Protein-L-isoaspartate O-methyltransferase"/>
    <property type="match status" value="1"/>
</dbReference>
<dbReference type="Gene3D" id="3.40.50.150">
    <property type="entry name" value="Vaccinia Virus protein VP39"/>
    <property type="match status" value="1"/>
</dbReference>
<dbReference type="HAMAP" id="MF_00090">
    <property type="entry name" value="PIMT"/>
    <property type="match status" value="1"/>
</dbReference>
<dbReference type="InterPro" id="IPR000682">
    <property type="entry name" value="PCMT"/>
</dbReference>
<dbReference type="InterPro" id="IPR029063">
    <property type="entry name" value="SAM-dependent_MTases_sf"/>
</dbReference>
<dbReference type="NCBIfam" id="TIGR00080">
    <property type="entry name" value="pimt"/>
    <property type="match status" value="1"/>
</dbReference>
<dbReference type="NCBIfam" id="NF001453">
    <property type="entry name" value="PRK00312.1"/>
    <property type="match status" value="1"/>
</dbReference>
<dbReference type="PANTHER" id="PTHR11579">
    <property type="entry name" value="PROTEIN-L-ISOASPARTATE O-METHYLTRANSFERASE"/>
    <property type="match status" value="1"/>
</dbReference>
<dbReference type="PANTHER" id="PTHR11579:SF0">
    <property type="entry name" value="PROTEIN-L-ISOASPARTATE(D-ASPARTATE) O-METHYLTRANSFERASE"/>
    <property type="match status" value="1"/>
</dbReference>
<dbReference type="Pfam" id="PF01135">
    <property type="entry name" value="PCMT"/>
    <property type="match status" value="1"/>
</dbReference>
<dbReference type="SUPFAM" id="SSF53335">
    <property type="entry name" value="S-adenosyl-L-methionine-dependent methyltransferases"/>
    <property type="match status" value="1"/>
</dbReference>
<dbReference type="PROSITE" id="PS01279">
    <property type="entry name" value="PCMT"/>
    <property type="match status" value="1"/>
</dbReference>
<reference key="1">
    <citation type="journal article" date="2009" name="J. Bacteriol.">
        <title>The complete genome sequence of Helicobacter pylori strain G27.</title>
        <authorList>
            <person name="Baltrus D.A."/>
            <person name="Amieva M.R."/>
            <person name="Covacci A."/>
            <person name="Lowe T.M."/>
            <person name="Merrell D.S."/>
            <person name="Ottemann K.M."/>
            <person name="Stein M."/>
            <person name="Salama N.R."/>
            <person name="Guillemin K."/>
        </authorList>
    </citation>
    <scope>NUCLEOTIDE SEQUENCE [LARGE SCALE GENOMIC DNA]</scope>
    <source>
        <strain>G27</strain>
    </source>
</reference>
<organism>
    <name type="scientific">Helicobacter pylori (strain G27)</name>
    <dbReference type="NCBI Taxonomy" id="563041"/>
    <lineage>
        <taxon>Bacteria</taxon>
        <taxon>Pseudomonadati</taxon>
        <taxon>Campylobacterota</taxon>
        <taxon>Epsilonproteobacteria</taxon>
        <taxon>Campylobacterales</taxon>
        <taxon>Helicobacteraceae</taxon>
        <taxon>Helicobacter</taxon>
    </lineage>
</organism>
<accession>B5Z887</accession>
<proteinExistence type="inferred from homology"/>
<gene>
    <name evidence="1" type="primary">pcm</name>
    <name type="ordered locus">HPG27_1033</name>
</gene>
<comment type="function">
    <text evidence="1">Catalyzes the methyl esterification of L-isoaspartyl residues in peptides and proteins that result from spontaneous decomposition of normal L-aspartyl and L-asparaginyl residues. It plays a role in the repair and/or degradation of damaged proteins.</text>
</comment>
<comment type="catalytic activity">
    <reaction evidence="1">
        <text>[protein]-L-isoaspartate + S-adenosyl-L-methionine = [protein]-L-isoaspartate alpha-methyl ester + S-adenosyl-L-homocysteine</text>
        <dbReference type="Rhea" id="RHEA:12705"/>
        <dbReference type="Rhea" id="RHEA-COMP:12143"/>
        <dbReference type="Rhea" id="RHEA-COMP:12144"/>
        <dbReference type="ChEBI" id="CHEBI:57856"/>
        <dbReference type="ChEBI" id="CHEBI:59789"/>
        <dbReference type="ChEBI" id="CHEBI:90596"/>
        <dbReference type="ChEBI" id="CHEBI:90598"/>
        <dbReference type="EC" id="2.1.1.77"/>
    </reaction>
</comment>
<comment type="subcellular location">
    <subcellularLocation>
        <location evidence="1">Cytoplasm</location>
    </subcellularLocation>
</comment>
<comment type="similarity">
    <text evidence="1">Belongs to the methyltransferase superfamily. L-isoaspartyl/D-aspartyl protein methyltransferase family.</text>
</comment>